<organism>
    <name type="scientific">Escherichia coli (strain SMS-3-5 / SECEC)</name>
    <dbReference type="NCBI Taxonomy" id="439855"/>
    <lineage>
        <taxon>Bacteria</taxon>
        <taxon>Pseudomonadati</taxon>
        <taxon>Pseudomonadota</taxon>
        <taxon>Gammaproteobacteria</taxon>
        <taxon>Enterobacterales</taxon>
        <taxon>Enterobacteriaceae</taxon>
        <taxon>Escherichia</taxon>
    </lineage>
</organism>
<keyword id="KW-0071">Autoinducer synthesis</keyword>
<keyword id="KW-0408">Iron</keyword>
<keyword id="KW-0456">Lyase</keyword>
<keyword id="KW-0479">Metal-binding</keyword>
<keyword id="KW-0673">Quorum sensing</keyword>
<dbReference type="EC" id="4.4.1.21" evidence="1"/>
<dbReference type="EMBL" id="CP000970">
    <property type="protein sequence ID" value="ACB19637.1"/>
    <property type="molecule type" value="Genomic_DNA"/>
</dbReference>
<dbReference type="RefSeq" id="WP_001130208.1">
    <property type="nucleotide sequence ID" value="NC_010498.1"/>
</dbReference>
<dbReference type="SMR" id="B1LPG2"/>
<dbReference type="KEGG" id="ecm:EcSMS35_2809"/>
<dbReference type="HOGENOM" id="CLU_107531_2_0_6"/>
<dbReference type="Proteomes" id="UP000007011">
    <property type="component" value="Chromosome"/>
</dbReference>
<dbReference type="GO" id="GO:0005506">
    <property type="term" value="F:iron ion binding"/>
    <property type="evidence" value="ECO:0007669"/>
    <property type="project" value="InterPro"/>
</dbReference>
<dbReference type="GO" id="GO:0043768">
    <property type="term" value="F:S-ribosylhomocysteine lyase activity"/>
    <property type="evidence" value="ECO:0007669"/>
    <property type="project" value="UniProtKB-UniRule"/>
</dbReference>
<dbReference type="GO" id="GO:0009372">
    <property type="term" value="P:quorum sensing"/>
    <property type="evidence" value="ECO:0007669"/>
    <property type="project" value="UniProtKB-UniRule"/>
</dbReference>
<dbReference type="FunFam" id="3.30.1360.80:FF:000001">
    <property type="entry name" value="S-ribosylhomocysteine lyase"/>
    <property type="match status" value="1"/>
</dbReference>
<dbReference type="Gene3D" id="3.30.1360.80">
    <property type="entry name" value="S-ribosylhomocysteinase (LuxS)"/>
    <property type="match status" value="1"/>
</dbReference>
<dbReference type="HAMAP" id="MF_00091">
    <property type="entry name" value="LuxS"/>
    <property type="match status" value="1"/>
</dbReference>
<dbReference type="InterPro" id="IPR037005">
    <property type="entry name" value="LuxS_sf"/>
</dbReference>
<dbReference type="InterPro" id="IPR011249">
    <property type="entry name" value="Metalloenz_LuxS/M16"/>
</dbReference>
<dbReference type="InterPro" id="IPR003815">
    <property type="entry name" value="S-ribosylhomocysteinase"/>
</dbReference>
<dbReference type="NCBIfam" id="NF002602">
    <property type="entry name" value="PRK02260.1-2"/>
    <property type="match status" value="1"/>
</dbReference>
<dbReference type="PANTHER" id="PTHR35799">
    <property type="entry name" value="S-RIBOSYLHOMOCYSTEINE LYASE"/>
    <property type="match status" value="1"/>
</dbReference>
<dbReference type="PANTHER" id="PTHR35799:SF1">
    <property type="entry name" value="S-RIBOSYLHOMOCYSTEINE LYASE"/>
    <property type="match status" value="1"/>
</dbReference>
<dbReference type="Pfam" id="PF02664">
    <property type="entry name" value="LuxS"/>
    <property type="match status" value="1"/>
</dbReference>
<dbReference type="PIRSF" id="PIRSF006160">
    <property type="entry name" value="AI2"/>
    <property type="match status" value="1"/>
</dbReference>
<dbReference type="PRINTS" id="PR01487">
    <property type="entry name" value="LUXSPROTEIN"/>
</dbReference>
<dbReference type="SUPFAM" id="SSF63411">
    <property type="entry name" value="LuxS/MPP-like metallohydrolase"/>
    <property type="match status" value="1"/>
</dbReference>
<comment type="function">
    <text evidence="1">Involved in the synthesis of autoinducer 2 (AI-2) which is secreted by bacteria and is used to communicate both the cell density and the metabolic potential of the environment. The regulation of gene expression in response to changes in cell density is called quorum sensing. Catalyzes the transformation of S-ribosylhomocysteine (RHC) to homocysteine (HC) and 4,5-dihydroxy-2,3-pentadione (DPD).</text>
</comment>
<comment type="catalytic activity">
    <reaction evidence="1">
        <text>S-(5-deoxy-D-ribos-5-yl)-L-homocysteine = (S)-4,5-dihydroxypentane-2,3-dione + L-homocysteine</text>
        <dbReference type="Rhea" id="RHEA:17753"/>
        <dbReference type="ChEBI" id="CHEBI:29484"/>
        <dbReference type="ChEBI" id="CHEBI:58195"/>
        <dbReference type="ChEBI" id="CHEBI:58199"/>
        <dbReference type="EC" id="4.4.1.21"/>
    </reaction>
</comment>
<comment type="cofactor">
    <cofactor evidence="1">
        <name>Fe cation</name>
        <dbReference type="ChEBI" id="CHEBI:24875"/>
    </cofactor>
    <text evidence="1">Binds 1 Fe cation per subunit.</text>
</comment>
<comment type="subunit">
    <text evidence="1">Homodimer.</text>
</comment>
<comment type="similarity">
    <text evidence="1">Belongs to the LuxS family.</text>
</comment>
<feature type="chain" id="PRO_1000117221" description="S-ribosylhomocysteine lyase">
    <location>
        <begin position="1"/>
        <end position="171"/>
    </location>
</feature>
<feature type="binding site" evidence="1">
    <location>
        <position position="54"/>
    </location>
    <ligand>
        <name>Fe cation</name>
        <dbReference type="ChEBI" id="CHEBI:24875"/>
    </ligand>
</feature>
<feature type="binding site" evidence="1">
    <location>
        <position position="58"/>
    </location>
    <ligand>
        <name>Fe cation</name>
        <dbReference type="ChEBI" id="CHEBI:24875"/>
    </ligand>
</feature>
<feature type="binding site" evidence="1">
    <location>
        <position position="128"/>
    </location>
    <ligand>
        <name>Fe cation</name>
        <dbReference type="ChEBI" id="CHEBI:24875"/>
    </ligand>
</feature>
<proteinExistence type="inferred from homology"/>
<reference key="1">
    <citation type="journal article" date="2008" name="J. Bacteriol.">
        <title>Insights into the environmental resistance gene pool from the genome sequence of the multidrug-resistant environmental isolate Escherichia coli SMS-3-5.</title>
        <authorList>
            <person name="Fricke W.F."/>
            <person name="Wright M.S."/>
            <person name="Lindell A.H."/>
            <person name="Harkins D.M."/>
            <person name="Baker-Austin C."/>
            <person name="Ravel J."/>
            <person name="Stepanauskas R."/>
        </authorList>
    </citation>
    <scope>NUCLEOTIDE SEQUENCE [LARGE SCALE GENOMIC DNA]</scope>
    <source>
        <strain>SMS-3-5 / SECEC</strain>
    </source>
</reference>
<gene>
    <name evidence="1" type="primary">luxS</name>
    <name type="ordered locus">EcSMS35_2809</name>
</gene>
<sequence length="171" mass="19443">MPLLDSFTVDHTRMEAPAVRVAKTMNTPHGDAITVFDLRFCVPNKEVMPERGIHTLEHLFAGFMRNHLNGNGVEIIDISPMGCRTGFYMSLIGTPDEQRVADAWKAAMEDVLKVQDQNQIPELNVYQCGTYQMHSLQEAQDIARNILERDVRINSNEELALPKEKLQELHI</sequence>
<accession>B1LPG2</accession>
<evidence type="ECO:0000255" key="1">
    <source>
        <dbReference type="HAMAP-Rule" id="MF_00091"/>
    </source>
</evidence>
<protein>
    <recommendedName>
        <fullName evidence="1">S-ribosylhomocysteine lyase</fullName>
        <ecNumber evidence="1">4.4.1.21</ecNumber>
    </recommendedName>
    <alternativeName>
        <fullName evidence="1">AI-2 synthesis protein</fullName>
    </alternativeName>
    <alternativeName>
        <fullName evidence="1">Autoinducer-2 production protein LuxS</fullName>
    </alternativeName>
</protein>
<name>LUXS_ECOSM</name>